<feature type="chain" id="PRO_0000089243" description="Protein C2">
    <location>
        <begin position="1"/>
        <end position="82"/>
    </location>
</feature>
<gene>
    <name type="primary">C2</name>
</gene>
<organism>
    <name type="scientific">Sterkiella nova</name>
    <name type="common">Ciliate</name>
    <name type="synonym">Oxytricha nova</name>
    <dbReference type="NCBI Taxonomy" id="200597"/>
    <lineage>
        <taxon>Eukaryota</taxon>
        <taxon>Sar</taxon>
        <taxon>Alveolata</taxon>
        <taxon>Ciliophora</taxon>
        <taxon>Intramacronucleata</taxon>
        <taxon>Spirotrichea</taxon>
        <taxon>Stichotrichia</taxon>
        <taxon>Sporadotrichida</taxon>
        <taxon>Oxytrichidae</taxon>
        <taxon>Stylonychinae</taxon>
        <taxon>Sterkiella</taxon>
    </lineage>
</organism>
<sequence length="82" mass="9028">MSYRRGSGPSEEEMIMQQMMIKLSMGISGQCFKECVTSFSSGQMVPQEATCIQSCAKRQQSAFMAMNDIQGQLQAKQGAGMF</sequence>
<reference key="1">
    <citation type="journal article" date="1984" name="Cell">
        <title>Internal sequences are eliminated from genes during macronuclear development in the ciliated protozoan Oxytricha nova.</title>
        <authorList>
            <person name="Klobutcher L.A."/>
            <person name="Jahn C.L."/>
            <person name="Prescott D.M."/>
        </authorList>
    </citation>
    <scope>NUCLEOTIDE SEQUENCE [GENOMIC DNA]</scope>
</reference>
<name>C2_STENO</name>
<dbReference type="EMBL" id="K02624">
    <property type="protein sequence ID" value="AAA64886.1"/>
    <property type="molecule type" value="Genomic_DNA"/>
</dbReference>
<dbReference type="EMBL" id="K02625">
    <property type="protein sequence ID" value="AAA64887.1"/>
    <property type="molecule type" value="Genomic_DNA"/>
</dbReference>
<dbReference type="EMBL" id="K02628">
    <property type="protein sequence ID" value="AAA64888.1"/>
    <property type="molecule type" value="Genomic_DNA"/>
</dbReference>
<dbReference type="SMR" id="P05526"/>
<dbReference type="Gene3D" id="1.10.287.810">
    <property type="entry name" value="Mitochondrial import inner membrane translocase subunit tim13 like domains"/>
    <property type="match status" value="1"/>
</dbReference>
<dbReference type="InterPro" id="IPR004217">
    <property type="entry name" value="Tim10-like"/>
</dbReference>
<dbReference type="InterPro" id="IPR035427">
    <property type="entry name" value="Tim10-like_dom_sf"/>
</dbReference>
<dbReference type="Pfam" id="PF02953">
    <property type="entry name" value="zf-Tim10_DDP"/>
    <property type="match status" value="1"/>
</dbReference>
<dbReference type="SUPFAM" id="SSF144122">
    <property type="entry name" value="Tim10-like"/>
    <property type="match status" value="1"/>
</dbReference>
<protein>
    <recommendedName>
        <fullName>Protein C2</fullName>
    </recommendedName>
</protein>
<accession>P05526</accession>
<proteinExistence type="predicted"/>